<dbReference type="EC" id="2.1.1.206" evidence="1"/>
<dbReference type="EMBL" id="CP000682">
    <property type="protein sequence ID" value="ABP96416.1"/>
    <property type="molecule type" value="Genomic_DNA"/>
</dbReference>
<dbReference type="SMR" id="A4YJ14"/>
<dbReference type="STRING" id="399549.Msed_2278"/>
<dbReference type="KEGG" id="mse:Msed_2278"/>
<dbReference type="eggNOG" id="arCOG01857">
    <property type="taxonomic scope" value="Archaea"/>
</dbReference>
<dbReference type="HOGENOM" id="CLU_123709_0_0_2"/>
<dbReference type="Proteomes" id="UP000000242">
    <property type="component" value="Chromosome"/>
</dbReference>
<dbReference type="GO" id="GO:0005737">
    <property type="term" value="C:cytoplasm"/>
    <property type="evidence" value="ECO:0007669"/>
    <property type="project" value="UniProtKB-SubCell"/>
</dbReference>
<dbReference type="GO" id="GO:0106059">
    <property type="term" value="F:tRNA (cytidine(56)-2'-O)-methyltransferase activity"/>
    <property type="evidence" value="ECO:0007669"/>
    <property type="project" value="UniProtKB-EC"/>
</dbReference>
<dbReference type="GO" id="GO:0002128">
    <property type="term" value="P:tRNA nucleoside ribose methylation"/>
    <property type="evidence" value="ECO:0007669"/>
    <property type="project" value="UniProtKB-UniRule"/>
</dbReference>
<dbReference type="CDD" id="cd18083">
    <property type="entry name" value="aTrm56-like"/>
    <property type="match status" value="1"/>
</dbReference>
<dbReference type="Gene3D" id="3.40.1280.10">
    <property type="match status" value="1"/>
</dbReference>
<dbReference type="HAMAP" id="MF_00077">
    <property type="entry name" value="tRNA_methyltr_aTrm56"/>
    <property type="match status" value="1"/>
</dbReference>
<dbReference type="InterPro" id="IPR029028">
    <property type="entry name" value="Alpha/beta_knot_MTases"/>
</dbReference>
<dbReference type="InterPro" id="IPR029026">
    <property type="entry name" value="tRNA_m1G_MTases_N"/>
</dbReference>
<dbReference type="InterPro" id="IPR002845">
    <property type="entry name" value="tRNA_mtfrase_aTrm56"/>
</dbReference>
<dbReference type="PANTHER" id="PTHR42197">
    <property type="entry name" value="TRNA (CYTIDINE(56)-2'-O)-METHYLTRANSFERASE"/>
    <property type="match status" value="1"/>
</dbReference>
<dbReference type="PANTHER" id="PTHR42197:SF1">
    <property type="entry name" value="TRNA (CYTIDINE(56)-2'-O)-METHYLTRANSFERASE"/>
    <property type="match status" value="1"/>
</dbReference>
<dbReference type="Pfam" id="PF01994">
    <property type="entry name" value="Trm56"/>
    <property type="match status" value="1"/>
</dbReference>
<dbReference type="PIRSF" id="PIRSF016123">
    <property type="entry name" value="UCP016123"/>
    <property type="match status" value="1"/>
</dbReference>
<dbReference type="SUPFAM" id="SSF75217">
    <property type="entry name" value="alpha/beta knot"/>
    <property type="match status" value="1"/>
</dbReference>
<sequence>MLRLGHRPQRDKRVTTHVALVARAFGAKGIYIHGNDQKLAKKIEDVINVWGGKYFRIEMISNPKKLVNDWKATGGKVVHLTMYGINLPHVQEKLKELDKILVIVGAEKVEGWYYHMADFNVAISNQPHSEVASLALFLDRVYKGEELNIMFGDSKISVIPMERGKKVVRNDGQH</sequence>
<accession>A4YJ14</accession>
<gene>
    <name type="ordered locus">Msed_2278</name>
</gene>
<reference key="1">
    <citation type="journal article" date="2008" name="Appl. Environ. Microbiol.">
        <title>The genome sequence of the metal-mobilizing, extremely thermoacidophilic archaeon Metallosphaera sedula provides insights into bioleaching-associated metabolism.</title>
        <authorList>
            <person name="Auernik K.S."/>
            <person name="Maezato Y."/>
            <person name="Blum P.H."/>
            <person name="Kelly R.M."/>
        </authorList>
    </citation>
    <scope>NUCLEOTIDE SEQUENCE [LARGE SCALE GENOMIC DNA]</scope>
    <source>
        <strain>ATCC 51363 / DSM 5348 / JCM 9185 / NBRC 15509 / TH2</strain>
    </source>
</reference>
<evidence type="ECO:0000255" key="1">
    <source>
        <dbReference type="HAMAP-Rule" id="MF_00077"/>
    </source>
</evidence>
<proteinExistence type="inferred from homology"/>
<organism>
    <name type="scientific">Metallosphaera sedula (strain ATCC 51363 / DSM 5348 / JCM 9185 / NBRC 15509 / TH2)</name>
    <dbReference type="NCBI Taxonomy" id="399549"/>
    <lineage>
        <taxon>Archaea</taxon>
        <taxon>Thermoproteota</taxon>
        <taxon>Thermoprotei</taxon>
        <taxon>Sulfolobales</taxon>
        <taxon>Sulfolobaceae</taxon>
        <taxon>Metallosphaera</taxon>
    </lineage>
</organism>
<keyword id="KW-0963">Cytoplasm</keyword>
<keyword id="KW-0489">Methyltransferase</keyword>
<keyword id="KW-1185">Reference proteome</keyword>
<keyword id="KW-0949">S-adenosyl-L-methionine</keyword>
<keyword id="KW-0808">Transferase</keyword>
<keyword id="KW-0819">tRNA processing</keyword>
<protein>
    <recommendedName>
        <fullName evidence="1">tRNA (cytidine(56)-2'-O)-methyltransferase</fullName>
        <ecNumber evidence="1">2.1.1.206</ecNumber>
    </recommendedName>
    <alternativeName>
        <fullName evidence="1">tRNA ribose 2'-O-methyltransferase aTrm56</fullName>
    </alternativeName>
</protein>
<comment type="function">
    <text evidence="1">Specifically catalyzes the AdoMet-dependent 2'-O-ribose methylation of cytidine at position 56 in tRNAs.</text>
</comment>
<comment type="catalytic activity">
    <reaction evidence="1">
        <text>cytidine(56) in tRNA + S-adenosyl-L-methionine = 2'-O-methylcytidine(56) in tRNA + S-adenosyl-L-homocysteine + H(+)</text>
        <dbReference type="Rhea" id="RHEA:42968"/>
        <dbReference type="Rhea" id="RHEA-COMP:10308"/>
        <dbReference type="Rhea" id="RHEA-COMP:10309"/>
        <dbReference type="ChEBI" id="CHEBI:15378"/>
        <dbReference type="ChEBI" id="CHEBI:57856"/>
        <dbReference type="ChEBI" id="CHEBI:59789"/>
        <dbReference type="ChEBI" id="CHEBI:74495"/>
        <dbReference type="ChEBI" id="CHEBI:82748"/>
        <dbReference type="EC" id="2.1.1.206"/>
    </reaction>
</comment>
<comment type="subunit">
    <text evidence="1">Homodimer.</text>
</comment>
<comment type="subcellular location">
    <subcellularLocation>
        <location evidence="1">Cytoplasm</location>
    </subcellularLocation>
</comment>
<comment type="similarity">
    <text evidence="1">Belongs to the aTrm56 family.</text>
</comment>
<feature type="chain" id="PRO_0000365303" description="tRNA (cytidine(56)-2'-O)-methyltransferase">
    <location>
        <begin position="1"/>
        <end position="174"/>
    </location>
</feature>
<feature type="binding site" evidence="1">
    <location>
        <position position="80"/>
    </location>
    <ligand>
        <name>S-adenosyl-L-methionine</name>
        <dbReference type="ChEBI" id="CHEBI:59789"/>
    </ligand>
</feature>
<feature type="binding site" evidence="1">
    <location>
        <begin position="105"/>
        <end position="109"/>
    </location>
    <ligand>
        <name>S-adenosyl-L-methionine</name>
        <dbReference type="ChEBI" id="CHEBI:59789"/>
    </ligand>
</feature>
<feature type="binding site" evidence="1">
    <location>
        <begin position="123"/>
        <end position="130"/>
    </location>
    <ligand>
        <name>S-adenosyl-L-methionine</name>
        <dbReference type="ChEBI" id="CHEBI:59789"/>
    </ligand>
</feature>
<name>TRM56_METS5</name>